<reference key="1">
    <citation type="journal article" date="2010" name="Proc. Natl. Acad. Sci. U.S.A.">
        <title>Insights into evolution of multicellular fungi from the assembled chromosomes of the mushroom Coprinopsis cinerea (Coprinus cinereus).</title>
        <authorList>
            <person name="Stajich J.E."/>
            <person name="Wilke S.K."/>
            <person name="Ahren D."/>
            <person name="Au C.H."/>
            <person name="Birren B.W."/>
            <person name="Borodovsky M."/>
            <person name="Burns C."/>
            <person name="Canbaeck B."/>
            <person name="Casselton L.A."/>
            <person name="Cheng C.K."/>
            <person name="Deng J."/>
            <person name="Dietrich F.S."/>
            <person name="Fargo D.C."/>
            <person name="Farman M.L."/>
            <person name="Gathman A.C."/>
            <person name="Goldberg J."/>
            <person name="Guigo R."/>
            <person name="Hoegger P.J."/>
            <person name="Hooker J.B."/>
            <person name="Huggins A."/>
            <person name="James T.Y."/>
            <person name="Kamada T."/>
            <person name="Kilaru S."/>
            <person name="Kodira C."/>
            <person name="Kuees U."/>
            <person name="Kupfer D."/>
            <person name="Kwan H.S."/>
            <person name="Lomsadze A."/>
            <person name="Li W."/>
            <person name="Lilly W.W."/>
            <person name="Ma L.-J."/>
            <person name="Mackey A.J."/>
            <person name="Manning G."/>
            <person name="Martin F."/>
            <person name="Muraguchi H."/>
            <person name="Natvig D.O."/>
            <person name="Palmerini H."/>
            <person name="Ramesh M.A."/>
            <person name="Rehmeyer C.J."/>
            <person name="Roe B.A."/>
            <person name="Shenoy N."/>
            <person name="Stanke M."/>
            <person name="Ter-Hovhannisyan V."/>
            <person name="Tunlid A."/>
            <person name="Velagapudi R."/>
            <person name="Vision T.J."/>
            <person name="Zeng Q."/>
            <person name="Zolan M.E."/>
            <person name="Pukkila P.J."/>
        </authorList>
    </citation>
    <scope>NUCLEOTIDE SEQUENCE [LARGE SCALE GENOMIC DNA]</scope>
    <source>
        <strain>Okayama-7 / 130 / ATCC MYA-4618 / FGSC 9003</strain>
    </source>
</reference>
<protein>
    <recommendedName>
        <fullName>GDP-mannose transporter</fullName>
        <shortName>GMT</shortName>
    </recommendedName>
</protein>
<comment type="function">
    <text evidence="1">Involved in the import of GDP-mannose from the cytoplasm into the Golgi lumen.</text>
</comment>
<comment type="subunit">
    <text evidence="1">Homooligomer.</text>
</comment>
<comment type="subcellular location">
    <subcellularLocation>
        <location evidence="1">Golgi apparatus membrane</location>
        <topology evidence="1">Multi-pass membrane protein</topology>
    </subcellularLocation>
    <subcellularLocation>
        <location evidence="1">Cytoplasmic vesicle membrane</location>
        <topology evidence="1">Multi-pass membrane protein</topology>
    </subcellularLocation>
    <subcellularLocation>
        <location evidence="1">Endoplasmic reticulum membrane</location>
        <topology evidence="1">Multi-pass membrane protein</topology>
    </subcellularLocation>
</comment>
<comment type="similarity">
    <text evidence="3">Belongs to the TPT transporter family. SLC35D subfamily.</text>
</comment>
<comment type="sequence caution" evidence="3">
    <conflict type="erroneous gene model prediction">
        <sequence resource="EMBL-CDS" id="EAU90125"/>
    </conflict>
</comment>
<proteinExistence type="inferred from homology"/>
<evidence type="ECO:0000250" key="1"/>
<evidence type="ECO:0000255" key="2"/>
<evidence type="ECO:0000305" key="3"/>
<dbReference type="EMBL" id="AACS02000007">
    <property type="protein sequence ID" value="EAU90125.2"/>
    <property type="status" value="ALT_SEQ"/>
    <property type="molecule type" value="Genomic_DNA"/>
</dbReference>
<dbReference type="RefSeq" id="XP_001831592.2">
    <property type="nucleotide sequence ID" value="XM_001831540.2"/>
</dbReference>
<dbReference type="SMR" id="A8N9T6"/>
<dbReference type="FunCoup" id="A8N9T6">
    <property type="interactions" value="188"/>
</dbReference>
<dbReference type="STRING" id="240176.A8N9T6"/>
<dbReference type="GeneID" id="6008064"/>
<dbReference type="KEGG" id="cci:CC1G_05663"/>
<dbReference type="HOGENOM" id="CLU_025360_1_2_1"/>
<dbReference type="InParanoid" id="A8N9T6"/>
<dbReference type="OrthoDB" id="417037at2759"/>
<dbReference type="Proteomes" id="UP000001861">
    <property type="component" value="Unassembled WGS sequence"/>
</dbReference>
<dbReference type="GO" id="GO:0030659">
    <property type="term" value="C:cytoplasmic vesicle membrane"/>
    <property type="evidence" value="ECO:0007669"/>
    <property type="project" value="UniProtKB-SubCell"/>
</dbReference>
<dbReference type="GO" id="GO:0005789">
    <property type="term" value="C:endoplasmic reticulum membrane"/>
    <property type="evidence" value="ECO:0007669"/>
    <property type="project" value="UniProtKB-SubCell"/>
</dbReference>
<dbReference type="GO" id="GO:0000139">
    <property type="term" value="C:Golgi membrane"/>
    <property type="evidence" value="ECO:0007669"/>
    <property type="project" value="UniProtKB-SubCell"/>
</dbReference>
<dbReference type="GO" id="GO:0055085">
    <property type="term" value="P:transmembrane transport"/>
    <property type="evidence" value="ECO:0007669"/>
    <property type="project" value="InterPro"/>
</dbReference>
<dbReference type="InterPro" id="IPR013657">
    <property type="entry name" value="SCL35B1-4/HUT1"/>
</dbReference>
<dbReference type="InterPro" id="IPR050186">
    <property type="entry name" value="TPT_transporter"/>
</dbReference>
<dbReference type="NCBIfam" id="TIGR00803">
    <property type="entry name" value="nst"/>
    <property type="match status" value="1"/>
</dbReference>
<dbReference type="PANTHER" id="PTHR11132">
    <property type="entry name" value="SOLUTE CARRIER FAMILY 35"/>
    <property type="match status" value="1"/>
</dbReference>
<dbReference type="Pfam" id="PF08449">
    <property type="entry name" value="UAA"/>
    <property type="match status" value="1"/>
</dbReference>
<dbReference type="SUPFAM" id="SSF103481">
    <property type="entry name" value="Multidrug resistance efflux transporter EmrE"/>
    <property type="match status" value="1"/>
</dbReference>
<organism>
    <name type="scientific">Coprinopsis cinerea (strain Okayama-7 / 130 / ATCC MYA-4618 / FGSC 9003)</name>
    <name type="common">Inky cap fungus</name>
    <name type="synonym">Hormographiella aspergillata</name>
    <dbReference type="NCBI Taxonomy" id="240176"/>
    <lineage>
        <taxon>Eukaryota</taxon>
        <taxon>Fungi</taxon>
        <taxon>Dikarya</taxon>
        <taxon>Basidiomycota</taxon>
        <taxon>Agaricomycotina</taxon>
        <taxon>Agaricomycetes</taxon>
        <taxon>Agaricomycetidae</taxon>
        <taxon>Agaricales</taxon>
        <taxon>Agaricineae</taxon>
        <taxon>Psathyrellaceae</taxon>
        <taxon>Coprinopsis</taxon>
    </lineage>
</organism>
<keyword id="KW-0968">Cytoplasmic vesicle</keyword>
<keyword id="KW-0256">Endoplasmic reticulum</keyword>
<keyword id="KW-0333">Golgi apparatus</keyword>
<keyword id="KW-0472">Membrane</keyword>
<keyword id="KW-1185">Reference proteome</keyword>
<keyword id="KW-0762">Sugar transport</keyword>
<keyword id="KW-0812">Transmembrane</keyword>
<keyword id="KW-1133">Transmembrane helix</keyword>
<keyword id="KW-0813">Transport</keyword>
<accession>A8N9T6</accession>
<feature type="chain" id="PRO_0000333519" description="GDP-mannose transporter">
    <location>
        <begin position="1"/>
        <end position="360"/>
    </location>
</feature>
<feature type="topological domain" description="Cytoplasmic" evidence="1">
    <location>
        <begin position="1"/>
        <end position="49"/>
    </location>
</feature>
<feature type="transmembrane region" description="Helical" evidence="2">
    <location>
        <begin position="50"/>
        <end position="67"/>
    </location>
</feature>
<feature type="topological domain" description="Lumenal" evidence="1">
    <location>
        <begin position="68"/>
        <end position="84"/>
    </location>
</feature>
<feature type="transmembrane region" description="Helical" evidence="2">
    <location>
        <begin position="85"/>
        <end position="105"/>
    </location>
</feature>
<feature type="topological domain" description="Cytoplasmic" evidence="1">
    <location>
        <begin position="106"/>
        <end position="110"/>
    </location>
</feature>
<feature type="transmembrane region" description="Helical" evidence="2">
    <location>
        <begin position="111"/>
        <end position="131"/>
    </location>
</feature>
<feature type="topological domain" description="Lumenal" evidence="1">
    <location>
        <begin position="132"/>
        <end position="134"/>
    </location>
</feature>
<feature type="transmembrane region" description="Helical" evidence="2">
    <location>
        <begin position="135"/>
        <end position="155"/>
    </location>
</feature>
<feature type="topological domain" description="Cytoplasmic" evidence="1">
    <location>
        <begin position="156"/>
        <end position="164"/>
    </location>
</feature>
<feature type="transmembrane region" description="Helical" evidence="2">
    <location>
        <begin position="165"/>
        <end position="185"/>
    </location>
</feature>
<feature type="topological domain" description="Lumenal" evidence="1">
    <location>
        <position position="186"/>
    </location>
</feature>
<feature type="transmembrane region" description="Helical" evidence="2">
    <location>
        <begin position="187"/>
        <end position="207"/>
    </location>
</feature>
<feature type="topological domain" description="Cytoplasmic" evidence="1">
    <location>
        <begin position="208"/>
        <end position="220"/>
    </location>
</feature>
<feature type="transmembrane region" description="Helical" evidence="2">
    <location>
        <begin position="221"/>
        <end position="241"/>
    </location>
</feature>
<feature type="topological domain" description="Lumenal" evidence="1">
    <location>
        <begin position="242"/>
        <end position="260"/>
    </location>
</feature>
<feature type="transmembrane region" description="Helical" evidence="2">
    <location>
        <begin position="261"/>
        <end position="281"/>
    </location>
</feature>
<feature type="topological domain" description="Cytoplasmic" evidence="1">
    <location>
        <begin position="282"/>
        <end position="291"/>
    </location>
</feature>
<feature type="transmembrane region" description="Helical" evidence="2">
    <location>
        <begin position="292"/>
        <end position="312"/>
    </location>
</feature>
<feature type="topological domain" description="Lumenal" evidence="1">
    <location>
        <begin position="313"/>
        <end position="314"/>
    </location>
</feature>
<feature type="transmembrane region" description="Helical" evidence="2">
    <location>
        <begin position="315"/>
        <end position="335"/>
    </location>
</feature>
<feature type="topological domain" description="Cytoplasmic" evidence="1">
    <location>
        <begin position="336"/>
        <end position="360"/>
    </location>
</feature>
<sequence length="360" mass="38863">MSSSETKGRNEEDVAEIKKAIATGAVKDPSNLSAIPPIFVVSGANFSMNFLLLCIQSSVCCACVFAVKKLGIISFRDFDMKDAKMWFPISFLLVSVIYTGSKSLQYLSIPVYTIFKNLTIILIAYGEVLWFGGRVTALTFVSFIFMVISSIIAAWSDVQSALASSIPGASSGVSVGAMQSLFGALRGLNVGYFWMLVNCLTSAAYVLSMRKRIKSTGFSDWDTMFYNNLLSIPVLAVFSLIAEDWGRENLNRNFPAETRNFLLFAIAFSGAAAVGISYTTAWCVRVTSSTTYSMVGALNKLPVAASGMLFFGDPVTVGSVSAVGVGFFAGIVYAVAKNNQKKNERRQAADAIIPMASRKP</sequence>
<name>GMT_COPC7</name>
<gene>
    <name type="primary">VRG4</name>
    <name type="ORF">CC1G_05663</name>
</gene>